<sequence>MSVPDRKRALEAAIAYIEKQFGAGSIMSLGKHSSAHEISTIKTGALSLDLALGIGGVPKGRIVEIFGPESSGKTTLATHIVANAQKMGGVAAYIDAEHALDPNYAALIGANINDLMISQPDCGEDALSIAELLARSGAVDVIVIDSVAALVPKSELEGEIGDVHVGLQARMMSQALRKLTATLARTNTCAIFINQIREKIGVSFGNPETTTGGRALKFYSSIRIDIRRIGSIKGGENFDIGNRIKVKVAKNKLAPPFRTAEFDILFNEGISSAGCIIDLAVEKNIIDKKGSWFNYQDRKLGQGREAVREELKRNKELFHELERRIYESVQASQVPAAACVDAESREVAEAAK</sequence>
<comment type="function">
    <text evidence="1">Can catalyze the hydrolysis of ATP in the presence of single-stranded DNA, the ATP-dependent uptake of single-stranded DNA by duplex DNA, and the ATP-dependent hybridization of homologous single-stranded DNAs. It interacts with LexA causing its activation and leading to its autocatalytic cleavage.</text>
</comment>
<comment type="subcellular location">
    <subcellularLocation>
        <location evidence="1">Cytoplasm</location>
    </subcellularLocation>
</comment>
<comment type="similarity">
    <text evidence="1">Belongs to the RecA family.</text>
</comment>
<proteinExistence type="inferred from homology"/>
<name>RECA_CHLTR</name>
<evidence type="ECO:0000255" key="1">
    <source>
        <dbReference type="HAMAP-Rule" id="MF_00268"/>
    </source>
</evidence>
<keyword id="KW-0067">ATP-binding</keyword>
<keyword id="KW-0963">Cytoplasm</keyword>
<keyword id="KW-0227">DNA damage</keyword>
<keyword id="KW-0233">DNA recombination</keyword>
<keyword id="KW-0234">DNA repair</keyword>
<keyword id="KW-0238">DNA-binding</keyword>
<keyword id="KW-0547">Nucleotide-binding</keyword>
<keyword id="KW-1185">Reference proteome</keyword>
<keyword id="KW-0742">SOS response</keyword>
<protein>
    <recommendedName>
        <fullName evidence="1">Protein RecA</fullName>
    </recommendedName>
    <alternativeName>
        <fullName evidence="1">Recombinase A</fullName>
    </alternativeName>
</protein>
<organism>
    <name type="scientific">Chlamydia trachomatis serovar D (strain ATCC VR-885 / DSM 19411 / UW-3/Cx)</name>
    <dbReference type="NCBI Taxonomy" id="272561"/>
    <lineage>
        <taxon>Bacteria</taxon>
        <taxon>Pseudomonadati</taxon>
        <taxon>Chlamydiota</taxon>
        <taxon>Chlamydiia</taxon>
        <taxon>Chlamydiales</taxon>
        <taxon>Chlamydiaceae</taxon>
        <taxon>Chlamydia/Chlamydophila group</taxon>
        <taxon>Chlamydia</taxon>
    </lineage>
</organism>
<reference key="1">
    <citation type="journal article" date="1995" name="Infect. Immun.">
        <title>Identification of the Chlamydia trachomatis RecA-encoding gene.</title>
        <authorList>
            <person name="Zhang D.J."/>
            <person name="Fan H."/>
            <person name="McClarty G."/>
            <person name="Brunham R.C."/>
        </authorList>
    </citation>
    <scope>NUCLEOTIDE SEQUENCE [GENOMIC DNA]</scope>
    <source>
        <strain>L2</strain>
    </source>
</reference>
<reference key="2">
    <citation type="submission" date="1994-04" db="EMBL/GenBank/DDBJ databases">
        <title>Sequence of the recA gene from Chlamydia trachomatis L2.</title>
        <authorList>
            <person name="Pohlner J."/>
        </authorList>
    </citation>
    <scope>NUCLEOTIDE SEQUENCE [GENOMIC DNA]</scope>
    <source>
        <strain>L2</strain>
    </source>
</reference>
<reference key="3">
    <citation type="journal article" date="1998" name="Science">
        <title>Genome sequence of an obligate intracellular pathogen of humans: Chlamydia trachomatis.</title>
        <authorList>
            <person name="Stephens R.S."/>
            <person name="Kalman S."/>
            <person name="Lammel C.J."/>
            <person name="Fan J."/>
            <person name="Marathe R."/>
            <person name="Aravind L."/>
            <person name="Mitchell W.P."/>
            <person name="Olinger L."/>
            <person name="Tatusov R.L."/>
            <person name="Zhao Q."/>
            <person name="Koonin E.V."/>
            <person name="Davis R.W."/>
        </authorList>
    </citation>
    <scope>NUCLEOTIDE SEQUENCE [LARGE SCALE GENOMIC DNA]</scope>
    <source>
        <strain>ATCC VR-885 / DSM 19411 / UW-3/Cx</strain>
    </source>
</reference>
<feature type="chain" id="PRO_0000122687" description="Protein RecA">
    <location>
        <begin position="1"/>
        <end position="352"/>
    </location>
</feature>
<feature type="binding site" evidence="1">
    <location>
        <begin position="67"/>
        <end position="74"/>
    </location>
    <ligand>
        <name>ATP</name>
        <dbReference type="ChEBI" id="CHEBI:30616"/>
    </ligand>
</feature>
<feature type="sequence variant" description="In strain: L2.">
    <original>V</original>
    <variation>A</variation>
    <location>
        <position position="334"/>
    </location>
</feature>
<feature type="sequence variant" description="In strain: L2.">
    <original>A</original>
    <variation>S</variation>
    <location>
        <position position="342"/>
    </location>
</feature>
<dbReference type="EMBL" id="U15281">
    <property type="protein sequence ID" value="AAA75588.1"/>
    <property type="molecule type" value="Genomic_DNA"/>
</dbReference>
<dbReference type="EMBL" id="Z32530">
    <property type="protein sequence ID" value="CAA83539.1"/>
    <property type="molecule type" value="Genomic_DNA"/>
</dbReference>
<dbReference type="EMBL" id="AE001273">
    <property type="protein sequence ID" value="AAC68827.1"/>
    <property type="molecule type" value="Genomic_DNA"/>
</dbReference>
<dbReference type="PIR" id="H71488">
    <property type="entry name" value="H71488"/>
</dbReference>
<dbReference type="RefSeq" id="NP_220168.1">
    <property type="nucleotide sequence ID" value="NC_000117.1"/>
</dbReference>
<dbReference type="RefSeq" id="WP_010725291.1">
    <property type="nucleotide sequence ID" value="NC_000117.1"/>
</dbReference>
<dbReference type="SMR" id="P0CD80"/>
<dbReference type="FunCoup" id="P0CD80">
    <property type="interactions" value="271"/>
</dbReference>
<dbReference type="STRING" id="272561.CT_650"/>
<dbReference type="EnsemblBacteria" id="AAC68827">
    <property type="protein sequence ID" value="AAC68827"/>
    <property type="gene ID" value="CT_650"/>
</dbReference>
<dbReference type="GeneID" id="884433"/>
<dbReference type="KEGG" id="ctr:CT_650"/>
<dbReference type="PATRIC" id="fig|272561.5.peg.714"/>
<dbReference type="HOGENOM" id="CLU_040469_3_2_0"/>
<dbReference type="InParanoid" id="P0CD80"/>
<dbReference type="OrthoDB" id="9776733at2"/>
<dbReference type="Proteomes" id="UP000000431">
    <property type="component" value="Chromosome"/>
</dbReference>
<dbReference type="GO" id="GO:0005737">
    <property type="term" value="C:cytoplasm"/>
    <property type="evidence" value="ECO:0007669"/>
    <property type="project" value="UniProtKB-SubCell"/>
</dbReference>
<dbReference type="GO" id="GO:0005524">
    <property type="term" value="F:ATP binding"/>
    <property type="evidence" value="ECO:0007669"/>
    <property type="project" value="UniProtKB-UniRule"/>
</dbReference>
<dbReference type="GO" id="GO:0016887">
    <property type="term" value="F:ATP hydrolysis activity"/>
    <property type="evidence" value="ECO:0007669"/>
    <property type="project" value="InterPro"/>
</dbReference>
<dbReference type="GO" id="GO:0140664">
    <property type="term" value="F:ATP-dependent DNA damage sensor activity"/>
    <property type="evidence" value="ECO:0007669"/>
    <property type="project" value="InterPro"/>
</dbReference>
<dbReference type="GO" id="GO:0003684">
    <property type="term" value="F:damaged DNA binding"/>
    <property type="evidence" value="ECO:0007669"/>
    <property type="project" value="UniProtKB-UniRule"/>
</dbReference>
<dbReference type="GO" id="GO:0003697">
    <property type="term" value="F:single-stranded DNA binding"/>
    <property type="evidence" value="ECO:0007669"/>
    <property type="project" value="UniProtKB-UniRule"/>
</dbReference>
<dbReference type="GO" id="GO:0006310">
    <property type="term" value="P:DNA recombination"/>
    <property type="evidence" value="ECO:0007669"/>
    <property type="project" value="UniProtKB-UniRule"/>
</dbReference>
<dbReference type="GO" id="GO:0006281">
    <property type="term" value="P:DNA repair"/>
    <property type="evidence" value="ECO:0007669"/>
    <property type="project" value="UniProtKB-UniRule"/>
</dbReference>
<dbReference type="GO" id="GO:0009432">
    <property type="term" value="P:SOS response"/>
    <property type="evidence" value="ECO:0007669"/>
    <property type="project" value="UniProtKB-UniRule"/>
</dbReference>
<dbReference type="CDD" id="cd00983">
    <property type="entry name" value="RecA"/>
    <property type="match status" value="1"/>
</dbReference>
<dbReference type="FunFam" id="3.40.50.300:FF:000087">
    <property type="entry name" value="Recombinase RecA"/>
    <property type="match status" value="1"/>
</dbReference>
<dbReference type="Gene3D" id="3.40.50.300">
    <property type="entry name" value="P-loop containing nucleotide triphosphate hydrolases"/>
    <property type="match status" value="1"/>
</dbReference>
<dbReference type="HAMAP" id="MF_00268">
    <property type="entry name" value="RecA"/>
    <property type="match status" value="1"/>
</dbReference>
<dbReference type="InterPro" id="IPR003593">
    <property type="entry name" value="AAA+_ATPase"/>
</dbReference>
<dbReference type="InterPro" id="IPR013765">
    <property type="entry name" value="DNA_recomb/repair_RecA"/>
</dbReference>
<dbReference type="InterPro" id="IPR020584">
    <property type="entry name" value="DNA_recomb/repair_RecA_CS"/>
</dbReference>
<dbReference type="InterPro" id="IPR027417">
    <property type="entry name" value="P-loop_NTPase"/>
</dbReference>
<dbReference type="InterPro" id="IPR049261">
    <property type="entry name" value="RecA-like_C"/>
</dbReference>
<dbReference type="InterPro" id="IPR049428">
    <property type="entry name" value="RecA-like_N"/>
</dbReference>
<dbReference type="InterPro" id="IPR020588">
    <property type="entry name" value="RecA_ATP-bd"/>
</dbReference>
<dbReference type="InterPro" id="IPR023400">
    <property type="entry name" value="RecA_C_sf"/>
</dbReference>
<dbReference type="InterPro" id="IPR020587">
    <property type="entry name" value="RecA_monomer-monomer_interface"/>
</dbReference>
<dbReference type="NCBIfam" id="TIGR02012">
    <property type="entry name" value="tigrfam_recA"/>
    <property type="match status" value="1"/>
</dbReference>
<dbReference type="PANTHER" id="PTHR45900:SF1">
    <property type="entry name" value="MITOCHONDRIAL DNA REPAIR PROTEIN RECA HOMOLOG-RELATED"/>
    <property type="match status" value="1"/>
</dbReference>
<dbReference type="PANTHER" id="PTHR45900">
    <property type="entry name" value="RECA"/>
    <property type="match status" value="1"/>
</dbReference>
<dbReference type="Pfam" id="PF00154">
    <property type="entry name" value="RecA"/>
    <property type="match status" value="1"/>
</dbReference>
<dbReference type="Pfam" id="PF21096">
    <property type="entry name" value="RecA_C"/>
    <property type="match status" value="1"/>
</dbReference>
<dbReference type="PRINTS" id="PR00142">
    <property type="entry name" value="RECA"/>
</dbReference>
<dbReference type="SMART" id="SM00382">
    <property type="entry name" value="AAA"/>
    <property type="match status" value="1"/>
</dbReference>
<dbReference type="SUPFAM" id="SSF52540">
    <property type="entry name" value="P-loop containing nucleoside triphosphate hydrolases"/>
    <property type="match status" value="1"/>
</dbReference>
<dbReference type="SUPFAM" id="SSF54752">
    <property type="entry name" value="RecA protein, C-terminal domain"/>
    <property type="match status" value="1"/>
</dbReference>
<dbReference type="PROSITE" id="PS00321">
    <property type="entry name" value="RECA_1"/>
    <property type="match status" value="1"/>
</dbReference>
<dbReference type="PROSITE" id="PS50162">
    <property type="entry name" value="RECA_2"/>
    <property type="match status" value="1"/>
</dbReference>
<dbReference type="PROSITE" id="PS50163">
    <property type="entry name" value="RECA_3"/>
    <property type="match status" value="1"/>
</dbReference>
<accession>P0CD80</accession>
<accession>O84656</accession>
<accession>P48287</accession>
<gene>
    <name evidence="1" type="primary">recA</name>
    <name type="ordered locus">CT_650</name>
</gene>